<reference key="1">
    <citation type="journal article" date="2011" name="J. Bacteriol.">
        <title>Genome sequence of Thermotoga sp. strain RQ2, a hyperthermophilic bacterium isolated from a geothermally heated region of the seafloor near Ribeira Quente, the Azores.</title>
        <authorList>
            <person name="Swithers K.S."/>
            <person name="DiPippo J.L."/>
            <person name="Bruce D.C."/>
            <person name="Detter C."/>
            <person name="Tapia R."/>
            <person name="Han S."/>
            <person name="Saunders E."/>
            <person name="Goodwin L.A."/>
            <person name="Han J."/>
            <person name="Woyke T."/>
            <person name="Pitluck S."/>
            <person name="Pennacchio L."/>
            <person name="Nolan M."/>
            <person name="Mikhailova N."/>
            <person name="Lykidis A."/>
            <person name="Land M.L."/>
            <person name="Brettin T."/>
            <person name="Stetter K.O."/>
            <person name="Nelson K.E."/>
            <person name="Gogarten J.P."/>
            <person name="Noll K.M."/>
        </authorList>
    </citation>
    <scope>NUCLEOTIDE SEQUENCE [LARGE SCALE GENOMIC DNA]</scope>
    <source>
        <strain>RQ2</strain>
    </source>
</reference>
<reference evidence="5 7" key="2">
    <citation type="journal article" date="2001" name="Mol. Biol. Evol.">
        <title>Phylogenetic analyses of two 'archaeal' genes in thermotoga maritima reveal multiple transfers between archaea and bacteria.</title>
        <authorList>
            <person name="Nesbo C.L."/>
            <person name="L'Haridon S."/>
            <person name="Stetter K.O."/>
            <person name="Doolittle W.F."/>
        </authorList>
    </citation>
    <scope>NUCLEOTIDE SEQUENCE [GENOMIC DNA] OF 95-402</scope>
    <scope>PHYLOGENETIC STUDY</scope>
    <source>
        <strain evidence="7">RQ2</strain>
    </source>
</reference>
<name>AGLUS_THESQ</name>
<gene>
    <name evidence="7" type="primary">gltB</name>
    <name type="ordered locus">TRQ2_0537</name>
</gene>
<feature type="chain" id="PRO_0000420609" description="Archaeal-type glutamate synthase [NADPH]">
    <location>
        <begin position="1"/>
        <end position="507"/>
    </location>
</feature>
<feature type="domain" description="4Fe-4S ferredoxin-type 1" evidence="3">
    <location>
        <begin position="10"/>
        <end position="39"/>
    </location>
</feature>
<feature type="domain" description="4Fe-4S ferredoxin-type 2" evidence="3">
    <location>
        <begin position="41"/>
        <end position="70"/>
    </location>
</feature>
<feature type="binding site" evidence="1">
    <location>
        <position position="19"/>
    </location>
    <ligand>
        <name>[4Fe-4S] cluster</name>
        <dbReference type="ChEBI" id="CHEBI:49883"/>
        <label>1</label>
    </ligand>
</feature>
<feature type="binding site" evidence="1">
    <location>
        <position position="22"/>
    </location>
    <ligand>
        <name>[4Fe-4S] cluster</name>
        <dbReference type="ChEBI" id="CHEBI:49883"/>
        <label>1</label>
    </ligand>
</feature>
<feature type="binding site" evidence="1">
    <location>
        <position position="25"/>
    </location>
    <ligand>
        <name>[4Fe-4S] cluster</name>
        <dbReference type="ChEBI" id="CHEBI:49883"/>
        <label>1</label>
    </ligand>
</feature>
<feature type="binding site" evidence="1">
    <location>
        <position position="29"/>
    </location>
    <ligand>
        <name>[4Fe-4S] cluster</name>
        <dbReference type="ChEBI" id="CHEBI:49883"/>
        <label>2</label>
    </ligand>
</feature>
<feature type="binding site" evidence="1">
    <location>
        <position position="50"/>
    </location>
    <ligand>
        <name>[4Fe-4S] cluster</name>
        <dbReference type="ChEBI" id="CHEBI:49883"/>
        <label>2</label>
    </ligand>
</feature>
<feature type="binding site" evidence="1">
    <location>
        <position position="53"/>
    </location>
    <ligand>
        <name>[4Fe-4S] cluster</name>
        <dbReference type="ChEBI" id="CHEBI:49883"/>
        <label>2</label>
    </ligand>
</feature>
<feature type="binding site" evidence="1">
    <location>
        <position position="56"/>
    </location>
    <ligand>
        <name>[4Fe-4S] cluster</name>
        <dbReference type="ChEBI" id="CHEBI:49883"/>
        <label>2</label>
    </ligand>
</feature>
<feature type="binding site" evidence="1">
    <location>
        <position position="60"/>
    </location>
    <ligand>
        <name>[4Fe-4S] cluster</name>
        <dbReference type="ChEBI" id="CHEBI:49883"/>
        <label>1</label>
    </ligand>
</feature>
<protein>
    <recommendedName>
        <fullName evidence="4 6">Archaeal-type glutamate synthase [NADPH]</fullName>
        <ecNumber evidence="1 6">1.4.1.13</ecNumber>
    </recommendedName>
    <alternativeName>
        <fullName evidence="1">Archaeal-type NADPH-GOGAT</fullName>
    </alternativeName>
</protein>
<accession>B1L993</accession>
<accession>Q9EVU3</accession>
<keyword id="KW-0004">4Fe-4S</keyword>
<keyword id="KW-0028">Amino-acid biosynthesis</keyword>
<keyword id="KW-0285">Flavoprotein</keyword>
<keyword id="KW-0288">FMN</keyword>
<keyword id="KW-0314">Glutamate biosynthesis</keyword>
<keyword id="KW-0408">Iron</keyword>
<keyword id="KW-0411">Iron-sulfur</keyword>
<keyword id="KW-0479">Metal-binding</keyword>
<keyword id="KW-0521">NADP</keyword>
<keyword id="KW-0560">Oxidoreductase</keyword>
<keyword id="KW-0677">Repeat</keyword>
<comment type="catalytic activity">
    <reaction evidence="1">
        <text>2 L-glutamate + NADP(+) = L-glutamine + 2-oxoglutarate + NADPH + H(+)</text>
        <dbReference type="Rhea" id="RHEA:15501"/>
        <dbReference type="ChEBI" id="CHEBI:15378"/>
        <dbReference type="ChEBI" id="CHEBI:16810"/>
        <dbReference type="ChEBI" id="CHEBI:29985"/>
        <dbReference type="ChEBI" id="CHEBI:57783"/>
        <dbReference type="ChEBI" id="CHEBI:58349"/>
        <dbReference type="ChEBI" id="CHEBI:58359"/>
        <dbReference type="EC" id="1.4.1.13"/>
    </reaction>
</comment>
<comment type="cofactor">
    <cofactor evidence="1">
        <name>FMN</name>
        <dbReference type="ChEBI" id="CHEBI:58210"/>
    </cofactor>
</comment>
<comment type="similarity">
    <text evidence="2">Belongs to the glutamate synthase family.</text>
</comment>
<evidence type="ECO:0000250" key="1">
    <source>
        <dbReference type="UniProtKB" id="Q58746"/>
    </source>
</evidence>
<evidence type="ECO:0000255" key="2"/>
<evidence type="ECO:0000255" key="3">
    <source>
        <dbReference type="PROSITE-ProRule" id="PRU00711"/>
    </source>
</evidence>
<evidence type="ECO:0000303" key="4">
    <source>
    </source>
</evidence>
<evidence type="ECO:0000305" key="5"/>
<evidence type="ECO:0000312" key="6">
    <source>
        <dbReference type="EMBL" id="ACB08891.1"/>
    </source>
</evidence>
<evidence type="ECO:0000312" key="7">
    <source>
        <dbReference type="EMBL" id="CAC21217.1"/>
    </source>
</evidence>
<sequence length="507" mass="55199">MAKRKVPPEFVVERDDYKCIRCLACVRVCSYGANFYDENANRVYTENTKCVGCHFCEAICPTEAITVRKNDFDIRPLAHWTPEHLIGIMKQAETGGVLLTSMGNDRPYFSYFDRIVLNASQVTNPSIDPLREPMEIRTYIGRKEEKLEIEEDEDGTVKLKTEIAPQLKLEVPVMFTAMSYGSISLNAILSLARAARTVGTFFNTGEGGLPKELREFKDNMIVQVASGRFGVSADYLNAGSAVEIKIGQGAKPGIGGHLPGEKVTEPISETRMIPVGTDALSPAPHHDIYSIEDLRQLIYAIKEATRYEKPVGVKIAAVHNVAPIAAGAVRAGADYIVIDGIRGGTGAAPKITRDHVGIPIEFAVAVVDQRLREEGIRHMASIVVAGGIRNSADVIKAIALGADAVYIGTAALISLGCHLCQTCYLGKCNWGIATQDPKLTKRLNPEIGARRAANLLRAWAHEIKEILGGMGINAIESLRGNREVLRGVGLHEYELKLLGIKPAGEAW</sequence>
<proteinExistence type="inferred from homology"/>
<organism>
    <name type="scientific">Thermotoga sp. (strain RQ2)</name>
    <dbReference type="NCBI Taxonomy" id="126740"/>
    <lineage>
        <taxon>Bacteria</taxon>
        <taxon>Thermotogati</taxon>
        <taxon>Thermotogota</taxon>
        <taxon>Thermotogae</taxon>
        <taxon>Thermotogales</taxon>
        <taxon>Thermotogaceae</taxon>
        <taxon>Thermotoga</taxon>
    </lineage>
</organism>
<dbReference type="EC" id="1.4.1.13" evidence="1 6"/>
<dbReference type="EMBL" id="CP000969">
    <property type="protein sequence ID" value="ACB08891.1"/>
    <property type="molecule type" value="Genomic_DNA"/>
</dbReference>
<dbReference type="EMBL" id="AJ401004">
    <property type="protein sequence ID" value="CAC21217.1"/>
    <property type="molecule type" value="Genomic_DNA"/>
</dbReference>
<dbReference type="RefSeq" id="WP_004083229.1">
    <property type="nucleotide sequence ID" value="NC_010483.1"/>
</dbReference>
<dbReference type="SMR" id="B1L993"/>
<dbReference type="KEGG" id="trq:TRQ2_0537"/>
<dbReference type="HOGENOM" id="CLU_023342_1_1_0"/>
<dbReference type="Proteomes" id="UP000001687">
    <property type="component" value="Chromosome"/>
</dbReference>
<dbReference type="GO" id="GO:0051539">
    <property type="term" value="F:4 iron, 4 sulfur cluster binding"/>
    <property type="evidence" value="ECO:0007669"/>
    <property type="project" value="UniProtKB-KW"/>
</dbReference>
<dbReference type="GO" id="GO:0004355">
    <property type="term" value="F:glutamate synthase (NADPH) activity"/>
    <property type="evidence" value="ECO:0007669"/>
    <property type="project" value="UniProtKB-EC"/>
</dbReference>
<dbReference type="GO" id="GO:0046872">
    <property type="term" value="F:metal ion binding"/>
    <property type="evidence" value="ECO:0007669"/>
    <property type="project" value="UniProtKB-KW"/>
</dbReference>
<dbReference type="GO" id="GO:0006537">
    <property type="term" value="P:glutamate biosynthetic process"/>
    <property type="evidence" value="ECO:0007669"/>
    <property type="project" value="UniProtKB-KW"/>
</dbReference>
<dbReference type="CDD" id="cd02808">
    <property type="entry name" value="GltS_FMN"/>
    <property type="match status" value="1"/>
</dbReference>
<dbReference type="Gene3D" id="3.30.70.20">
    <property type="match status" value="1"/>
</dbReference>
<dbReference type="Gene3D" id="3.20.20.70">
    <property type="entry name" value="Aldolase class I"/>
    <property type="match status" value="1"/>
</dbReference>
<dbReference type="InterPro" id="IPR017896">
    <property type="entry name" value="4Fe4S_Fe-S-bd"/>
</dbReference>
<dbReference type="InterPro" id="IPR017900">
    <property type="entry name" value="4Fe4S_Fe_S_CS"/>
</dbReference>
<dbReference type="InterPro" id="IPR013785">
    <property type="entry name" value="Aldolase_TIM"/>
</dbReference>
<dbReference type="InterPro" id="IPR024188">
    <property type="entry name" value="GltB"/>
</dbReference>
<dbReference type="InterPro" id="IPR043578">
    <property type="entry name" value="GltB_archl_type"/>
</dbReference>
<dbReference type="InterPro" id="IPR002932">
    <property type="entry name" value="Glu_synthdom"/>
</dbReference>
<dbReference type="PANTHER" id="PTHR43819">
    <property type="entry name" value="ARCHAEAL-TYPE GLUTAMATE SYNTHASE [NADPH]"/>
    <property type="match status" value="1"/>
</dbReference>
<dbReference type="PANTHER" id="PTHR43819:SF1">
    <property type="entry name" value="ARCHAEAL-TYPE GLUTAMATE SYNTHASE [NADPH]"/>
    <property type="match status" value="1"/>
</dbReference>
<dbReference type="Pfam" id="PF12838">
    <property type="entry name" value="Fer4_7"/>
    <property type="match status" value="1"/>
</dbReference>
<dbReference type="Pfam" id="PF01645">
    <property type="entry name" value="Glu_synthase"/>
    <property type="match status" value="1"/>
</dbReference>
<dbReference type="PIRSF" id="PIRSF500061">
    <property type="entry name" value="GOGAT_lg2_archl"/>
    <property type="match status" value="1"/>
</dbReference>
<dbReference type="PIRSF" id="PIRSF006429">
    <property type="entry name" value="GOGAT_lg_2"/>
    <property type="match status" value="1"/>
</dbReference>
<dbReference type="SUPFAM" id="SSF54862">
    <property type="entry name" value="4Fe-4S ferredoxins"/>
    <property type="match status" value="1"/>
</dbReference>
<dbReference type="SUPFAM" id="SSF51395">
    <property type="entry name" value="FMN-linked oxidoreductases"/>
    <property type="match status" value="1"/>
</dbReference>
<dbReference type="PROSITE" id="PS00198">
    <property type="entry name" value="4FE4S_FER_1"/>
    <property type="match status" value="1"/>
</dbReference>
<dbReference type="PROSITE" id="PS51379">
    <property type="entry name" value="4FE4S_FER_2"/>
    <property type="match status" value="2"/>
</dbReference>